<reference key="1">
    <citation type="submission" date="2008-08" db="EMBL/GenBank/DDBJ databases">
        <title>The complete genome sequence of Coprothermobacter proteolyticus strain ATCC 5245 / DSM 5265 / BT.</title>
        <authorList>
            <person name="Dodson R.J."/>
            <person name="Durkin A.S."/>
            <person name="Wu M."/>
            <person name="Eisen J."/>
            <person name="Sutton G."/>
        </authorList>
    </citation>
    <scope>NUCLEOTIDE SEQUENCE [LARGE SCALE GENOMIC DNA]</scope>
    <source>
        <strain>ATCC 35245 / DSM 5265 / OCM 4 / BT</strain>
    </source>
</reference>
<organism>
    <name type="scientific">Coprothermobacter proteolyticus (strain ATCC 35245 / DSM 5265 / OCM 4 / BT)</name>
    <dbReference type="NCBI Taxonomy" id="309798"/>
    <lineage>
        <taxon>Bacteria</taxon>
        <taxon>Pseudomonadati</taxon>
        <taxon>Coprothermobacterota</taxon>
        <taxon>Coprothermobacteria</taxon>
        <taxon>Coprothermobacterales</taxon>
        <taxon>Coprothermobacteraceae</taxon>
        <taxon>Coprothermobacter</taxon>
    </lineage>
</organism>
<accession>B5Y795</accession>
<gene>
    <name evidence="1" type="primary">rpmB</name>
    <name type="ordered locus">COPRO5265_0274</name>
</gene>
<dbReference type="EMBL" id="CP001145">
    <property type="protein sequence ID" value="ACI18102.1"/>
    <property type="molecule type" value="Genomic_DNA"/>
</dbReference>
<dbReference type="RefSeq" id="WP_012544752.1">
    <property type="nucleotide sequence ID" value="NC_011295.1"/>
</dbReference>
<dbReference type="SMR" id="B5Y795"/>
<dbReference type="OrthoDB" id="9805609at2"/>
<dbReference type="Proteomes" id="UP000001732">
    <property type="component" value="Chromosome"/>
</dbReference>
<dbReference type="GO" id="GO:1990904">
    <property type="term" value="C:ribonucleoprotein complex"/>
    <property type="evidence" value="ECO:0007669"/>
    <property type="project" value="UniProtKB-KW"/>
</dbReference>
<dbReference type="GO" id="GO:0005840">
    <property type="term" value="C:ribosome"/>
    <property type="evidence" value="ECO:0007669"/>
    <property type="project" value="UniProtKB-KW"/>
</dbReference>
<dbReference type="GO" id="GO:0003735">
    <property type="term" value="F:structural constituent of ribosome"/>
    <property type="evidence" value="ECO:0007669"/>
    <property type="project" value="InterPro"/>
</dbReference>
<dbReference type="GO" id="GO:0006412">
    <property type="term" value="P:translation"/>
    <property type="evidence" value="ECO:0007669"/>
    <property type="project" value="UniProtKB-UniRule"/>
</dbReference>
<dbReference type="Gene3D" id="2.30.170.40">
    <property type="entry name" value="Ribosomal protein L28/L24"/>
    <property type="match status" value="1"/>
</dbReference>
<dbReference type="HAMAP" id="MF_00373">
    <property type="entry name" value="Ribosomal_bL28"/>
    <property type="match status" value="1"/>
</dbReference>
<dbReference type="InterPro" id="IPR050096">
    <property type="entry name" value="Bacterial_rp_bL28"/>
</dbReference>
<dbReference type="InterPro" id="IPR026569">
    <property type="entry name" value="Ribosomal_bL28"/>
</dbReference>
<dbReference type="InterPro" id="IPR034704">
    <property type="entry name" value="Ribosomal_bL28/bL31-like_sf"/>
</dbReference>
<dbReference type="InterPro" id="IPR001383">
    <property type="entry name" value="Ribosomal_bL28_bact-type"/>
</dbReference>
<dbReference type="InterPro" id="IPR037147">
    <property type="entry name" value="Ribosomal_bL28_sf"/>
</dbReference>
<dbReference type="NCBIfam" id="TIGR00009">
    <property type="entry name" value="L28"/>
    <property type="match status" value="1"/>
</dbReference>
<dbReference type="PANTHER" id="PTHR39080">
    <property type="entry name" value="50S RIBOSOMAL PROTEIN L28"/>
    <property type="match status" value="1"/>
</dbReference>
<dbReference type="PANTHER" id="PTHR39080:SF1">
    <property type="entry name" value="LARGE RIBOSOMAL SUBUNIT PROTEIN BL28A"/>
    <property type="match status" value="1"/>
</dbReference>
<dbReference type="Pfam" id="PF00830">
    <property type="entry name" value="Ribosomal_L28"/>
    <property type="match status" value="1"/>
</dbReference>
<dbReference type="SUPFAM" id="SSF143800">
    <property type="entry name" value="L28p-like"/>
    <property type="match status" value="1"/>
</dbReference>
<evidence type="ECO:0000255" key="1">
    <source>
        <dbReference type="HAMAP-Rule" id="MF_00373"/>
    </source>
</evidence>
<evidence type="ECO:0000305" key="2"/>
<name>RL28_COPPD</name>
<protein>
    <recommendedName>
        <fullName evidence="1">Large ribosomal subunit protein bL28</fullName>
    </recommendedName>
    <alternativeName>
        <fullName evidence="2">50S ribosomal protein L28</fullName>
    </alternativeName>
</protein>
<sequence length="63" mass="7070">MARVCSVCGKGTTFGHNVSHSNRRTNRRWVANLKRVHGRFPDGKVRTAYVCVKCLKAGKVEIL</sequence>
<proteinExistence type="inferred from homology"/>
<comment type="similarity">
    <text evidence="1">Belongs to the bacterial ribosomal protein bL28 family.</text>
</comment>
<feature type="chain" id="PRO_1000121611" description="Large ribosomal subunit protein bL28">
    <location>
        <begin position="1"/>
        <end position="63"/>
    </location>
</feature>
<keyword id="KW-1185">Reference proteome</keyword>
<keyword id="KW-0687">Ribonucleoprotein</keyword>
<keyword id="KW-0689">Ribosomal protein</keyword>